<name>Y2508_CUPTR</name>
<evidence type="ECO:0000255" key="1">
    <source>
        <dbReference type="PROSITE-ProRule" id="PRU01182"/>
    </source>
</evidence>
<evidence type="ECO:0000305" key="2"/>
<dbReference type="EMBL" id="CU633749">
    <property type="protein sequence ID" value="CAQ70439.1"/>
    <property type="molecule type" value="Genomic_DNA"/>
</dbReference>
<dbReference type="RefSeq" id="WP_012353739.1">
    <property type="nucleotide sequence ID" value="NC_010528.1"/>
</dbReference>
<dbReference type="SMR" id="B3R6F7"/>
<dbReference type="GeneID" id="29760263"/>
<dbReference type="KEGG" id="cti:RALTA_A2508"/>
<dbReference type="eggNOG" id="COG2003">
    <property type="taxonomic scope" value="Bacteria"/>
</dbReference>
<dbReference type="HOGENOM" id="CLU_073529_0_1_4"/>
<dbReference type="BioCyc" id="CTAI977880:RALTA_RS12190-MONOMER"/>
<dbReference type="Proteomes" id="UP000001692">
    <property type="component" value="Chromosome 1"/>
</dbReference>
<dbReference type="GO" id="GO:0046872">
    <property type="term" value="F:metal ion binding"/>
    <property type="evidence" value="ECO:0007669"/>
    <property type="project" value="UniProtKB-KW"/>
</dbReference>
<dbReference type="GO" id="GO:0008237">
    <property type="term" value="F:metallopeptidase activity"/>
    <property type="evidence" value="ECO:0007669"/>
    <property type="project" value="UniProtKB-KW"/>
</dbReference>
<dbReference type="GO" id="GO:0006508">
    <property type="term" value="P:proteolysis"/>
    <property type="evidence" value="ECO:0007669"/>
    <property type="project" value="UniProtKB-KW"/>
</dbReference>
<dbReference type="CDD" id="cd08071">
    <property type="entry name" value="MPN_DUF2466"/>
    <property type="match status" value="1"/>
</dbReference>
<dbReference type="Gene3D" id="1.10.150.20">
    <property type="entry name" value="5' to 3' exonuclease, C-terminal subdomain"/>
    <property type="match status" value="1"/>
</dbReference>
<dbReference type="Gene3D" id="3.40.140.10">
    <property type="entry name" value="Cytidine Deaminase, domain 2"/>
    <property type="match status" value="1"/>
</dbReference>
<dbReference type="InterPro" id="IPR037518">
    <property type="entry name" value="MPN"/>
</dbReference>
<dbReference type="InterPro" id="IPR025657">
    <property type="entry name" value="RadC_JAB"/>
</dbReference>
<dbReference type="InterPro" id="IPR010994">
    <property type="entry name" value="RuvA_2-like"/>
</dbReference>
<dbReference type="InterPro" id="IPR001405">
    <property type="entry name" value="UPF0758"/>
</dbReference>
<dbReference type="InterPro" id="IPR046778">
    <property type="entry name" value="UPF0758_N"/>
</dbReference>
<dbReference type="NCBIfam" id="NF000642">
    <property type="entry name" value="PRK00024.1"/>
    <property type="match status" value="1"/>
</dbReference>
<dbReference type="NCBIfam" id="TIGR00608">
    <property type="entry name" value="radc"/>
    <property type="match status" value="1"/>
</dbReference>
<dbReference type="PANTHER" id="PTHR30471">
    <property type="entry name" value="DNA REPAIR PROTEIN RADC"/>
    <property type="match status" value="1"/>
</dbReference>
<dbReference type="PANTHER" id="PTHR30471:SF3">
    <property type="entry name" value="UPF0758 PROTEIN YEES-RELATED"/>
    <property type="match status" value="1"/>
</dbReference>
<dbReference type="Pfam" id="PF04002">
    <property type="entry name" value="RadC"/>
    <property type="match status" value="1"/>
</dbReference>
<dbReference type="Pfam" id="PF20582">
    <property type="entry name" value="UPF0758_N"/>
    <property type="match status" value="1"/>
</dbReference>
<dbReference type="SUPFAM" id="SSF47781">
    <property type="entry name" value="RuvA domain 2-like"/>
    <property type="match status" value="1"/>
</dbReference>
<dbReference type="PROSITE" id="PS50249">
    <property type="entry name" value="MPN"/>
    <property type="match status" value="1"/>
</dbReference>
<feature type="chain" id="PRO_1000089810" description="UPF0758 protein RALTA_A2508">
    <location>
        <begin position="1"/>
        <end position="228"/>
    </location>
</feature>
<feature type="domain" description="MPN" evidence="1">
    <location>
        <begin position="102"/>
        <end position="224"/>
    </location>
</feature>
<feature type="short sequence motif" description="JAMM motif" evidence="1">
    <location>
        <begin position="173"/>
        <end position="186"/>
    </location>
</feature>
<feature type="binding site" evidence="1">
    <location>
        <position position="173"/>
    </location>
    <ligand>
        <name>Zn(2+)</name>
        <dbReference type="ChEBI" id="CHEBI:29105"/>
        <note>catalytic</note>
    </ligand>
</feature>
<feature type="binding site" evidence="1">
    <location>
        <position position="175"/>
    </location>
    <ligand>
        <name>Zn(2+)</name>
        <dbReference type="ChEBI" id="CHEBI:29105"/>
        <note>catalytic</note>
    </ligand>
</feature>
<feature type="binding site" evidence="1">
    <location>
        <position position="186"/>
    </location>
    <ligand>
        <name>Zn(2+)</name>
        <dbReference type="ChEBI" id="CHEBI:29105"/>
        <note>catalytic</note>
    </ligand>
</feature>
<reference key="1">
    <citation type="journal article" date="2008" name="Genome Res.">
        <title>Genome sequence of the beta-rhizobium Cupriavidus taiwanensis and comparative genomics of rhizobia.</title>
        <authorList>
            <person name="Amadou C."/>
            <person name="Pascal G."/>
            <person name="Mangenot S."/>
            <person name="Glew M."/>
            <person name="Bontemps C."/>
            <person name="Capela D."/>
            <person name="Carrere S."/>
            <person name="Cruveiller S."/>
            <person name="Dossat C."/>
            <person name="Lajus A."/>
            <person name="Marchetti M."/>
            <person name="Poinsot V."/>
            <person name="Rouy Z."/>
            <person name="Servin B."/>
            <person name="Saad M."/>
            <person name="Schenowitz C."/>
            <person name="Barbe V."/>
            <person name="Batut J."/>
            <person name="Medigue C."/>
            <person name="Masson-Boivin C."/>
        </authorList>
    </citation>
    <scope>NUCLEOTIDE SEQUENCE [LARGE SCALE GENOMIC DNA]</scope>
    <source>
        <strain>DSM 17343 / BCRC 17206 / CCUG 44338 / CIP 107171 / LMG 19424 / R1</strain>
    </source>
</reference>
<organism>
    <name type="scientific">Cupriavidus taiwanensis (strain DSM 17343 / BCRC 17206 / CCUG 44338 / CIP 107171 / LMG 19424 / R1)</name>
    <name type="common">Ralstonia taiwanensis (strain LMG 19424)</name>
    <dbReference type="NCBI Taxonomy" id="977880"/>
    <lineage>
        <taxon>Bacteria</taxon>
        <taxon>Pseudomonadati</taxon>
        <taxon>Pseudomonadota</taxon>
        <taxon>Betaproteobacteria</taxon>
        <taxon>Burkholderiales</taxon>
        <taxon>Burkholderiaceae</taxon>
        <taxon>Cupriavidus</taxon>
    </lineage>
</organism>
<proteinExistence type="inferred from homology"/>
<accession>B3R6F7</accession>
<sequence>MTISKWPACERPREKLLESGAAALSDAELLAVLLRVGAAGKSAVDLARELLHRFGSLTALFAAQGQALAGVRGMGAAKFAQVQAIPELARRALAESLRLPSGFDSPDSVRSYLRLTLAPLQHEVFMCLFLDPGNRMVASEELFRGTLTRTSVYPREVARQALAHNAAGIIVAHNHPRGTTAPSQSDIHLTRELARTLDLIDVRLLDHFIVAGHEIRSLAESCERLPGL</sequence>
<protein>
    <recommendedName>
        <fullName>UPF0758 protein RALTA_A2508</fullName>
    </recommendedName>
</protein>
<keyword id="KW-0378">Hydrolase</keyword>
<keyword id="KW-0479">Metal-binding</keyword>
<keyword id="KW-0482">Metalloprotease</keyword>
<keyword id="KW-0645">Protease</keyword>
<keyword id="KW-0862">Zinc</keyword>
<comment type="similarity">
    <text evidence="2">Belongs to the UPF0758 family.</text>
</comment>
<gene>
    <name type="ordered locus">RALTA_A2508</name>
</gene>